<feature type="chain" id="PRO_0000092885" description="Phosphate import ATP-binding protein PstB">
    <location>
        <begin position="1"/>
        <end position="291"/>
    </location>
</feature>
<feature type="domain" description="ABC transporter" evidence="1">
    <location>
        <begin position="45"/>
        <end position="286"/>
    </location>
</feature>
<feature type="binding site" evidence="1">
    <location>
        <begin position="77"/>
        <end position="84"/>
    </location>
    <ligand>
        <name>ATP</name>
        <dbReference type="ChEBI" id="CHEBI:30616"/>
    </ligand>
</feature>
<sequence>MVNSQVADKEKLDAQTNNQDSVATIVTTENNKKYTIPDSEKKIVYSTQNLDLWYGENHALQNINLDILENNVTAIIGPSGCGKSTYIKALNRMVELVPSVKTAGKILYRDQNIFDAKYSKEKLRTNVGMVFQQPNPFPKSIYDNITYGPKTHGIKNKKILDEIVEKSLRGAAIWDELKDRLHTNAYGLSGGQQQRVCIARCLAIEPDVILMDEPTSALDPISTLRVEELVQELKENYSIIMVTHNMQQAARVSDKTAFFLNGYVNEYDDTDKIFSNPADKQTEDYISGRFG</sequence>
<protein>
    <recommendedName>
        <fullName evidence="1">Phosphate import ATP-binding protein PstB</fullName>
        <ecNumber evidence="1">7.3.2.1</ecNumber>
    </recommendedName>
    <alternativeName>
        <fullName evidence="1">ABC phosphate transporter</fullName>
    </alternativeName>
    <alternativeName>
        <fullName evidence="1">Phosphate-transporting ATPase</fullName>
    </alternativeName>
</protein>
<proteinExistence type="inferred from homology"/>
<reference key="1">
    <citation type="journal article" date="2005" name="J. Bacteriol.">
        <title>Insights on evolution of virulence and resistance from the complete genome analysis of an early methicillin-resistant Staphylococcus aureus strain and a biofilm-producing methicillin-resistant Staphylococcus epidermidis strain.</title>
        <authorList>
            <person name="Gill S.R."/>
            <person name="Fouts D.E."/>
            <person name="Archer G.L."/>
            <person name="Mongodin E.F."/>
            <person name="DeBoy R.T."/>
            <person name="Ravel J."/>
            <person name="Paulsen I.T."/>
            <person name="Kolonay J.F."/>
            <person name="Brinkac L.M."/>
            <person name="Beanan M.J."/>
            <person name="Dodson R.J."/>
            <person name="Daugherty S.C."/>
            <person name="Madupu R."/>
            <person name="Angiuoli S.V."/>
            <person name="Durkin A.S."/>
            <person name="Haft D.H."/>
            <person name="Vamathevan J.J."/>
            <person name="Khouri H."/>
            <person name="Utterback T.R."/>
            <person name="Lee C."/>
            <person name="Dimitrov G."/>
            <person name="Jiang L."/>
            <person name="Qin H."/>
            <person name="Weidman J."/>
            <person name="Tran K."/>
            <person name="Kang K.H."/>
            <person name="Hance I.R."/>
            <person name="Nelson K.E."/>
            <person name="Fraser C.M."/>
        </authorList>
    </citation>
    <scope>NUCLEOTIDE SEQUENCE [LARGE SCALE GENOMIC DNA]</scope>
    <source>
        <strain>ATCC 35984 / DSM 28319 / BCRC 17069 / CCUG 31568 / BM 3577 / RP62A</strain>
    </source>
</reference>
<name>PSTB_STAEQ</name>
<accession>Q5HPF5</accession>
<keyword id="KW-0067">ATP-binding</keyword>
<keyword id="KW-1003">Cell membrane</keyword>
<keyword id="KW-0472">Membrane</keyword>
<keyword id="KW-0547">Nucleotide-binding</keyword>
<keyword id="KW-0592">Phosphate transport</keyword>
<keyword id="KW-1185">Reference proteome</keyword>
<keyword id="KW-1278">Translocase</keyword>
<keyword id="KW-0813">Transport</keyword>
<evidence type="ECO:0000255" key="1">
    <source>
        <dbReference type="HAMAP-Rule" id="MF_01702"/>
    </source>
</evidence>
<comment type="function">
    <text evidence="1">Part of the ABC transporter complex PstSACB involved in phosphate import. Responsible for energy coupling to the transport system.</text>
</comment>
<comment type="catalytic activity">
    <reaction evidence="1">
        <text>phosphate(out) + ATP + H2O = ADP + 2 phosphate(in) + H(+)</text>
        <dbReference type="Rhea" id="RHEA:24440"/>
        <dbReference type="ChEBI" id="CHEBI:15377"/>
        <dbReference type="ChEBI" id="CHEBI:15378"/>
        <dbReference type="ChEBI" id="CHEBI:30616"/>
        <dbReference type="ChEBI" id="CHEBI:43474"/>
        <dbReference type="ChEBI" id="CHEBI:456216"/>
        <dbReference type="EC" id="7.3.2.1"/>
    </reaction>
</comment>
<comment type="subunit">
    <text evidence="1">The complex is composed of two ATP-binding proteins (PstB), two transmembrane proteins (PstC and PstA) and a solute-binding protein (PstS).</text>
</comment>
<comment type="subcellular location">
    <subcellularLocation>
        <location evidence="1">Cell membrane</location>
        <topology evidence="1">Peripheral membrane protein</topology>
    </subcellularLocation>
</comment>
<comment type="similarity">
    <text evidence="1">Belongs to the ABC transporter superfamily. Phosphate importer (TC 3.A.1.7) family.</text>
</comment>
<dbReference type="EC" id="7.3.2.1" evidence="1"/>
<dbReference type="EMBL" id="CP000029">
    <property type="protein sequence ID" value="AAW54368.1"/>
    <property type="molecule type" value="Genomic_DNA"/>
</dbReference>
<dbReference type="RefSeq" id="WP_002446399.1">
    <property type="nucleotide sequence ID" value="NC_002976.3"/>
</dbReference>
<dbReference type="SMR" id="Q5HPF5"/>
<dbReference type="STRING" id="176279.SERP0957"/>
<dbReference type="KEGG" id="ser:SERP0957"/>
<dbReference type="eggNOG" id="COG1117">
    <property type="taxonomic scope" value="Bacteria"/>
</dbReference>
<dbReference type="HOGENOM" id="CLU_000604_1_22_9"/>
<dbReference type="Proteomes" id="UP000000531">
    <property type="component" value="Chromosome"/>
</dbReference>
<dbReference type="GO" id="GO:0005886">
    <property type="term" value="C:plasma membrane"/>
    <property type="evidence" value="ECO:0007669"/>
    <property type="project" value="UniProtKB-SubCell"/>
</dbReference>
<dbReference type="GO" id="GO:0005524">
    <property type="term" value="F:ATP binding"/>
    <property type="evidence" value="ECO:0007669"/>
    <property type="project" value="UniProtKB-KW"/>
</dbReference>
<dbReference type="GO" id="GO:0016887">
    <property type="term" value="F:ATP hydrolysis activity"/>
    <property type="evidence" value="ECO:0007669"/>
    <property type="project" value="InterPro"/>
</dbReference>
<dbReference type="GO" id="GO:0015415">
    <property type="term" value="F:ATPase-coupled phosphate ion transmembrane transporter activity"/>
    <property type="evidence" value="ECO:0007669"/>
    <property type="project" value="UniProtKB-EC"/>
</dbReference>
<dbReference type="GO" id="GO:0035435">
    <property type="term" value="P:phosphate ion transmembrane transport"/>
    <property type="evidence" value="ECO:0007669"/>
    <property type="project" value="InterPro"/>
</dbReference>
<dbReference type="CDD" id="cd03260">
    <property type="entry name" value="ABC_PstB_phosphate_transporter"/>
    <property type="match status" value="1"/>
</dbReference>
<dbReference type="Gene3D" id="3.40.50.300">
    <property type="entry name" value="P-loop containing nucleotide triphosphate hydrolases"/>
    <property type="match status" value="1"/>
</dbReference>
<dbReference type="InterPro" id="IPR003593">
    <property type="entry name" value="AAA+_ATPase"/>
</dbReference>
<dbReference type="InterPro" id="IPR003439">
    <property type="entry name" value="ABC_transporter-like_ATP-bd"/>
</dbReference>
<dbReference type="InterPro" id="IPR017871">
    <property type="entry name" value="ABC_transporter-like_CS"/>
</dbReference>
<dbReference type="InterPro" id="IPR027417">
    <property type="entry name" value="P-loop_NTPase"/>
</dbReference>
<dbReference type="InterPro" id="IPR005670">
    <property type="entry name" value="PstB-like"/>
</dbReference>
<dbReference type="NCBIfam" id="TIGR00972">
    <property type="entry name" value="3a0107s01c2"/>
    <property type="match status" value="1"/>
</dbReference>
<dbReference type="PANTHER" id="PTHR43423">
    <property type="entry name" value="ABC TRANSPORTER I FAMILY MEMBER 17"/>
    <property type="match status" value="1"/>
</dbReference>
<dbReference type="PANTHER" id="PTHR43423:SF1">
    <property type="entry name" value="ABC TRANSPORTER I FAMILY MEMBER 17"/>
    <property type="match status" value="1"/>
</dbReference>
<dbReference type="Pfam" id="PF00005">
    <property type="entry name" value="ABC_tran"/>
    <property type="match status" value="1"/>
</dbReference>
<dbReference type="SMART" id="SM00382">
    <property type="entry name" value="AAA"/>
    <property type="match status" value="1"/>
</dbReference>
<dbReference type="SUPFAM" id="SSF52540">
    <property type="entry name" value="P-loop containing nucleoside triphosphate hydrolases"/>
    <property type="match status" value="1"/>
</dbReference>
<dbReference type="PROSITE" id="PS00211">
    <property type="entry name" value="ABC_TRANSPORTER_1"/>
    <property type="match status" value="1"/>
</dbReference>
<dbReference type="PROSITE" id="PS50893">
    <property type="entry name" value="ABC_TRANSPORTER_2"/>
    <property type="match status" value="1"/>
</dbReference>
<dbReference type="PROSITE" id="PS51238">
    <property type="entry name" value="PSTB"/>
    <property type="match status" value="1"/>
</dbReference>
<organism>
    <name type="scientific">Staphylococcus epidermidis (strain ATCC 35984 / DSM 28319 / BCRC 17069 / CCUG 31568 / BM 3577 / RP62A)</name>
    <dbReference type="NCBI Taxonomy" id="176279"/>
    <lineage>
        <taxon>Bacteria</taxon>
        <taxon>Bacillati</taxon>
        <taxon>Bacillota</taxon>
        <taxon>Bacilli</taxon>
        <taxon>Bacillales</taxon>
        <taxon>Staphylococcaceae</taxon>
        <taxon>Staphylococcus</taxon>
    </lineage>
</organism>
<gene>
    <name evidence="1" type="primary">pstB</name>
    <name type="ordered locus">SERP0957</name>
</gene>